<organism>
    <name type="scientific">Saccharophagus degradans (strain 2-40 / ATCC 43961 / DSM 17024)</name>
    <dbReference type="NCBI Taxonomy" id="203122"/>
    <lineage>
        <taxon>Bacteria</taxon>
        <taxon>Pseudomonadati</taxon>
        <taxon>Pseudomonadota</taxon>
        <taxon>Gammaproteobacteria</taxon>
        <taxon>Cellvibrionales</taxon>
        <taxon>Cellvibrionaceae</taxon>
        <taxon>Saccharophagus</taxon>
    </lineage>
</organism>
<name>URE2_SACD2</name>
<accession>Q21P95</accession>
<sequence>MKPGEYDIQPGEIILNEGRARLTITVENSGDRPIQVGSHYHFYETNPALVFDREKTRGYRLNIAAGTAVRFEPGQDREVELVEVSGNKIIYGFRGEIMGEL</sequence>
<comment type="catalytic activity">
    <reaction evidence="1">
        <text>urea + 2 H2O + H(+) = hydrogencarbonate + 2 NH4(+)</text>
        <dbReference type="Rhea" id="RHEA:20557"/>
        <dbReference type="ChEBI" id="CHEBI:15377"/>
        <dbReference type="ChEBI" id="CHEBI:15378"/>
        <dbReference type="ChEBI" id="CHEBI:16199"/>
        <dbReference type="ChEBI" id="CHEBI:17544"/>
        <dbReference type="ChEBI" id="CHEBI:28938"/>
        <dbReference type="EC" id="3.5.1.5"/>
    </reaction>
</comment>
<comment type="pathway">
    <text evidence="1">Nitrogen metabolism; urea degradation; CO(2) and NH(3) from urea (urease route): step 1/1.</text>
</comment>
<comment type="subunit">
    <text evidence="1">Heterotrimer of UreA (gamma), UreB (beta) and UreC (alpha) subunits. Three heterotrimers associate to form the active enzyme.</text>
</comment>
<comment type="subcellular location">
    <subcellularLocation>
        <location evidence="1">Cytoplasm</location>
    </subcellularLocation>
</comment>
<comment type="similarity">
    <text evidence="1">Belongs to the urease beta subunit family.</text>
</comment>
<gene>
    <name evidence="1" type="primary">ureB</name>
    <name type="ordered locus">Sde_0220</name>
</gene>
<protein>
    <recommendedName>
        <fullName evidence="1">Urease subunit beta</fullName>
        <ecNumber evidence="1">3.5.1.5</ecNumber>
    </recommendedName>
    <alternativeName>
        <fullName evidence="1">Urea amidohydrolase subunit beta</fullName>
    </alternativeName>
</protein>
<dbReference type="EC" id="3.5.1.5" evidence="1"/>
<dbReference type="EMBL" id="CP000282">
    <property type="protein sequence ID" value="ABD79484.1"/>
    <property type="molecule type" value="Genomic_DNA"/>
</dbReference>
<dbReference type="RefSeq" id="WP_011466708.1">
    <property type="nucleotide sequence ID" value="NC_007912.1"/>
</dbReference>
<dbReference type="SMR" id="Q21P95"/>
<dbReference type="STRING" id="203122.Sde_0220"/>
<dbReference type="GeneID" id="98611926"/>
<dbReference type="KEGG" id="sde:Sde_0220"/>
<dbReference type="eggNOG" id="COG0832">
    <property type="taxonomic scope" value="Bacteria"/>
</dbReference>
<dbReference type="HOGENOM" id="CLU_129707_1_1_6"/>
<dbReference type="OrthoDB" id="9797217at2"/>
<dbReference type="UniPathway" id="UPA00258">
    <property type="reaction ID" value="UER00370"/>
</dbReference>
<dbReference type="Proteomes" id="UP000001947">
    <property type="component" value="Chromosome"/>
</dbReference>
<dbReference type="GO" id="GO:0035550">
    <property type="term" value="C:urease complex"/>
    <property type="evidence" value="ECO:0007669"/>
    <property type="project" value="InterPro"/>
</dbReference>
<dbReference type="GO" id="GO:0009039">
    <property type="term" value="F:urease activity"/>
    <property type="evidence" value="ECO:0007669"/>
    <property type="project" value="UniProtKB-UniRule"/>
</dbReference>
<dbReference type="GO" id="GO:0043419">
    <property type="term" value="P:urea catabolic process"/>
    <property type="evidence" value="ECO:0007669"/>
    <property type="project" value="UniProtKB-UniRule"/>
</dbReference>
<dbReference type="CDD" id="cd00407">
    <property type="entry name" value="Urease_beta"/>
    <property type="match status" value="1"/>
</dbReference>
<dbReference type="FunFam" id="2.10.150.10:FF:000001">
    <property type="entry name" value="Urease subunit beta"/>
    <property type="match status" value="1"/>
</dbReference>
<dbReference type="Gene3D" id="2.10.150.10">
    <property type="entry name" value="Urease, beta subunit"/>
    <property type="match status" value="1"/>
</dbReference>
<dbReference type="HAMAP" id="MF_01954">
    <property type="entry name" value="Urease_beta"/>
    <property type="match status" value="1"/>
</dbReference>
<dbReference type="InterPro" id="IPR002019">
    <property type="entry name" value="Urease_beta-like"/>
</dbReference>
<dbReference type="InterPro" id="IPR036461">
    <property type="entry name" value="Urease_betasu_sf"/>
</dbReference>
<dbReference type="InterPro" id="IPR050069">
    <property type="entry name" value="Urease_subunit"/>
</dbReference>
<dbReference type="NCBIfam" id="NF009682">
    <property type="entry name" value="PRK13203.1"/>
    <property type="match status" value="1"/>
</dbReference>
<dbReference type="NCBIfam" id="TIGR00192">
    <property type="entry name" value="urease_beta"/>
    <property type="match status" value="1"/>
</dbReference>
<dbReference type="PANTHER" id="PTHR33569">
    <property type="entry name" value="UREASE"/>
    <property type="match status" value="1"/>
</dbReference>
<dbReference type="PANTHER" id="PTHR33569:SF1">
    <property type="entry name" value="UREASE"/>
    <property type="match status" value="1"/>
</dbReference>
<dbReference type="Pfam" id="PF00699">
    <property type="entry name" value="Urease_beta"/>
    <property type="match status" value="1"/>
</dbReference>
<dbReference type="SUPFAM" id="SSF51278">
    <property type="entry name" value="Urease, beta-subunit"/>
    <property type="match status" value="1"/>
</dbReference>
<reference key="1">
    <citation type="journal article" date="2008" name="PLoS Genet.">
        <title>Complete genome sequence of the complex carbohydrate-degrading marine bacterium, Saccharophagus degradans strain 2-40 T.</title>
        <authorList>
            <person name="Weiner R.M."/>
            <person name="Taylor L.E. II"/>
            <person name="Henrissat B."/>
            <person name="Hauser L."/>
            <person name="Land M."/>
            <person name="Coutinho P.M."/>
            <person name="Rancurel C."/>
            <person name="Saunders E.H."/>
            <person name="Longmire A.G."/>
            <person name="Zhang H."/>
            <person name="Bayer E.A."/>
            <person name="Gilbert H.J."/>
            <person name="Larimer F."/>
            <person name="Zhulin I.B."/>
            <person name="Ekborg N.A."/>
            <person name="Lamed R."/>
            <person name="Richardson P.M."/>
            <person name="Borovok I."/>
            <person name="Hutcheson S."/>
        </authorList>
    </citation>
    <scope>NUCLEOTIDE SEQUENCE [LARGE SCALE GENOMIC DNA]</scope>
    <source>
        <strain>2-40 / ATCC 43961 / DSM 17024</strain>
    </source>
</reference>
<feature type="chain" id="PRO_0000239900" description="Urease subunit beta">
    <location>
        <begin position="1"/>
        <end position="101"/>
    </location>
</feature>
<keyword id="KW-0963">Cytoplasm</keyword>
<keyword id="KW-0378">Hydrolase</keyword>
<keyword id="KW-1185">Reference proteome</keyword>
<evidence type="ECO:0000255" key="1">
    <source>
        <dbReference type="HAMAP-Rule" id="MF_01954"/>
    </source>
</evidence>
<proteinExistence type="inferred from homology"/>